<organism>
    <name type="scientific">Streptomyces viridochromogenes (strain DSM 40736 / JCM 4977 / BCRC 1201 / Tue 494)</name>
    <dbReference type="NCBI Taxonomy" id="591159"/>
    <lineage>
        <taxon>Bacteria</taxon>
        <taxon>Bacillati</taxon>
        <taxon>Actinomycetota</taxon>
        <taxon>Actinomycetes</taxon>
        <taxon>Kitasatosporales</taxon>
        <taxon>Streptomycetaceae</taxon>
        <taxon>Streptomyces</taxon>
    </lineage>
</organism>
<protein>
    <recommendedName>
        <fullName evidence="4">Phosphinothricin N-acetyltransferase</fullName>
        <shortName evidence="5">PPT N-acetyltransferase</shortName>
        <ecNumber evidence="3">2.3.1.183</ecNumber>
    </recommendedName>
    <alternativeName>
        <fullName evidence="5">Phosphinothricin-resistance protein</fullName>
    </alternativeName>
</protein>
<gene>
    <name evidence="4" type="primary">pat</name>
</gene>
<dbReference type="EC" id="2.3.1.183" evidence="3"/>
<dbReference type="EMBL" id="X65195">
    <property type="protein sequence ID" value="CAA46314.1"/>
    <property type="molecule type" value="Genomic_DNA"/>
</dbReference>
<dbReference type="EMBL" id="M22827">
    <property type="protein sequence ID" value="AAA72709.1"/>
    <property type="molecule type" value="Genomic_DNA"/>
</dbReference>
<dbReference type="PIR" id="JT0409">
    <property type="entry name" value="JT0409"/>
</dbReference>
<dbReference type="RefSeq" id="WP_003988626.1">
    <property type="nucleotide sequence ID" value="NZ_GG657757.1"/>
</dbReference>
<dbReference type="SMR" id="Q57146"/>
<dbReference type="STRING" id="591159.SSQG_01029"/>
<dbReference type="eggNOG" id="COG1247">
    <property type="taxonomic scope" value="Bacteria"/>
</dbReference>
<dbReference type="OrthoDB" id="3173333at2"/>
<dbReference type="BioCyc" id="MetaCyc:MONOMER-15056"/>
<dbReference type="BRENDA" id="2.3.1.183">
    <property type="organism ID" value="6116"/>
</dbReference>
<dbReference type="GO" id="GO:0102971">
    <property type="term" value="F:phosphinothricin N-acetyltransferase activity"/>
    <property type="evidence" value="ECO:0007669"/>
    <property type="project" value="UniProtKB-EC"/>
</dbReference>
<dbReference type="GO" id="GO:0046677">
    <property type="term" value="P:response to antibiotic"/>
    <property type="evidence" value="ECO:0007669"/>
    <property type="project" value="UniProtKB-KW"/>
</dbReference>
<dbReference type="GO" id="GO:0009635">
    <property type="term" value="P:response to herbicide"/>
    <property type="evidence" value="ECO:0007669"/>
    <property type="project" value="UniProtKB-KW"/>
</dbReference>
<dbReference type="CDD" id="cd04301">
    <property type="entry name" value="NAT_SF"/>
    <property type="match status" value="1"/>
</dbReference>
<dbReference type="Gene3D" id="3.40.630.30">
    <property type="match status" value="1"/>
</dbReference>
<dbReference type="InterPro" id="IPR016181">
    <property type="entry name" value="Acyl_CoA_acyltransferase"/>
</dbReference>
<dbReference type="InterPro" id="IPR000182">
    <property type="entry name" value="GNAT_dom"/>
</dbReference>
<dbReference type="NCBIfam" id="NF040502">
    <property type="entry name" value="PPT_acetyltrans"/>
    <property type="match status" value="1"/>
</dbReference>
<dbReference type="PANTHER" id="PTHR43072">
    <property type="entry name" value="N-ACETYLTRANSFERASE"/>
    <property type="match status" value="1"/>
</dbReference>
<dbReference type="PANTHER" id="PTHR43072:SF23">
    <property type="entry name" value="UPF0039 PROTEIN C11D3.02C"/>
    <property type="match status" value="1"/>
</dbReference>
<dbReference type="Pfam" id="PF00583">
    <property type="entry name" value="Acetyltransf_1"/>
    <property type="match status" value="1"/>
</dbReference>
<dbReference type="SUPFAM" id="SSF55729">
    <property type="entry name" value="Acyl-CoA N-acyltransferases (Nat)"/>
    <property type="match status" value="1"/>
</dbReference>
<dbReference type="PROSITE" id="PS51186">
    <property type="entry name" value="GNAT"/>
    <property type="match status" value="1"/>
</dbReference>
<sequence>MSPERRPVEIRPATAADMAAVCDIVNHYIETSTVNFRTEPQTPQEWIDDLERLQDRYPWLVAEVEGVVAGIAYAGPWKARNAYDWTVESTVYVSHRHQRLGLGSTLYTHLLKSMEAQGFKSVVAVIGLPNDPSVRLHEALGYTARGTLRAAGYKHGGWHDVGFWQRDFELPAPPRPVRPVTQI</sequence>
<evidence type="ECO:0000250" key="1">
    <source>
        <dbReference type="UniProtKB" id="Q8ZPD3"/>
    </source>
</evidence>
<evidence type="ECO:0000255" key="2">
    <source>
        <dbReference type="PROSITE-ProRule" id="PRU00532"/>
    </source>
</evidence>
<evidence type="ECO:0000269" key="3">
    <source>
    </source>
</evidence>
<evidence type="ECO:0000303" key="4">
    <source>
    </source>
</evidence>
<evidence type="ECO:0000305" key="5"/>
<comment type="function">
    <text evidence="3">Inactivates phosphinothricin (PPT) by transfer of an acetyl group from acetyl CoA. This enzyme is an effector of phosphinothricin tripeptide (PTT or bialaphos) resistance.</text>
</comment>
<comment type="catalytic activity">
    <reaction evidence="3">
        <text>phosphinothricin + acetyl-CoA = N-acetylphosphinothricin + CoA + H(+)</text>
        <dbReference type="Rhea" id="RHEA:12597"/>
        <dbReference type="ChEBI" id="CHEBI:15378"/>
        <dbReference type="ChEBI" id="CHEBI:57287"/>
        <dbReference type="ChEBI" id="CHEBI:57288"/>
        <dbReference type="ChEBI" id="CHEBI:58879"/>
        <dbReference type="ChEBI" id="CHEBI:58882"/>
        <dbReference type="EC" id="2.3.1.183"/>
    </reaction>
</comment>
<comment type="biotechnology">
    <text>Introduced by genetic manipulation and expressed in glufosinate-tolerant canola and maize by Agrevo.</text>
</comment>
<comment type="similarity">
    <text evidence="5">Belongs to the acetyltransferase family. PAT/BAR subfamily.</text>
</comment>
<reference key="1">
    <citation type="journal article" date="1988" name="Gene">
        <title>Nucleotide sequence of the phosphinothricin N-acetyltransferase gene from Streptomyces viridochromogenes Tu494 and its expression in Nicotiana tabacum.</title>
        <authorList>
            <person name="Wohlleben W."/>
            <person name="Arnold W."/>
            <person name="Broer I."/>
            <person name="Hillemann D."/>
            <person name="Strauch E."/>
            <person name="Puehler A."/>
        </authorList>
    </citation>
    <scope>NUCLEOTIDE SEQUENCE [GENOMIC DNA]</scope>
    <source>
        <strain>DSM 40736 / JCM 4977 / BCRC 1201 / Tue 494</strain>
    </source>
</reference>
<reference key="2">
    <citation type="journal article" date="1996" name="Appl. Environ. Microbiol.">
        <title>The peptide synthetase gene phsA from Streptomyces viridochromogenes is not juxtaposed with other genes involved in nonribosomal biosynthesis of peptides.</title>
        <authorList>
            <person name="Schwartz D."/>
            <person name="Alijah R."/>
            <person name="Nussbaumer B."/>
            <person name="Pelzer S."/>
            <person name="Wohlleben W."/>
        </authorList>
    </citation>
    <scope>NUCLEOTIDE SEQUENCE [GENOMIC DNA]</scope>
    <source>
        <strain>DSM 40736 / JCM 4977 / BCRC 1201 / Tue 494</strain>
    </source>
</reference>
<reference key="3">
    <citation type="journal article" date="1988" name="Gene">
        <title>Cloning of a phosphinothricin N-acetyltransferase gene from Streptomyces viridochromogenes Tue494 and its expression in Streptomyces lividans and Escherichia coli.</title>
        <authorList>
            <person name="Strauch E."/>
            <person name="Wohlleben W."/>
            <person name="Puehler A."/>
        </authorList>
    </citation>
    <scope>FUNCTION</scope>
    <scope>CATALYTIC ACTIVITY</scope>
    <source>
        <strain>DSM 40736 / JCM 4977 / BCRC 1201 / Tue 494</strain>
    </source>
</reference>
<feature type="chain" id="PRO_0000074575" description="Phosphinothricin N-acetyltransferase">
    <location>
        <begin position="1"/>
        <end position="183"/>
    </location>
</feature>
<feature type="domain" description="N-acetyltransferase" evidence="2">
    <location>
        <begin position="8"/>
        <end position="169"/>
    </location>
</feature>
<feature type="binding site" evidence="1">
    <location>
        <begin position="91"/>
        <end position="93"/>
    </location>
    <ligand>
        <name>acetyl-CoA</name>
        <dbReference type="ChEBI" id="CHEBI:57288"/>
    </ligand>
</feature>
<feature type="binding site" evidence="1">
    <location>
        <begin position="99"/>
        <end position="104"/>
    </location>
    <ligand>
        <name>acetyl-CoA</name>
        <dbReference type="ChEBI" id="CHEBI:57288"/>
    </ligand>
</feature>
<feature type="binding site" evidence="1">
    <location>
        <position position="130"/>
    </location>
    <ligand>
        <name>acetyl-CoA</name>
        <dbReference type="ChEBI" id="CHEBI:57288"/>
    </ligand>
</feature>
<accession>Q57146</accession>
<keyword id="KW-0012">Acyltransferase</keyword>
<keyword id="KW-0046">Antibiotic resistance</keyword>
<keyword id="KW-0308">Genetically modified food</keyword>
<keyword id="KW-0359">Herbicide resistance</keyword>
<keyword id="KW-0808">Transferase</keyword>
<name>PAT_STRVT</name>
<proteinExistence type="evidence at protein level"/>